<comment type="function">
    <text evidence="1">Force generating protein of respiratory cilia. Produces force towards the minus ends of microtubules. Dynein has ATPase activity; the force-producing power stroke is thought to occur on release of ADP. Involved in sperm motility; implicated in sperm flagellar assembly (By similarity).</text>
</comment>
<comment type="subunit">
    <text>Consists of at least two heavy chains and a number of intermediate and light chains.</text>
</comment>
<comment type="subcellular location">
    <subcellularLocation>
        <location evidence="5">Cytoplasm</location>
        <location evidence="5">Cytoskeleton</location>
        <location evidence="5">Cilium axoneme</location>
    </subcellularLocation>
</comment>
<comment type="alternative products">
    <event type="alternative splicing"/>
    <isoform>
        <id>Q6ZR08-1</id>
        <name>1</name>
        <sequence type="displayed"/>
    </isoform>
    <isoform>
        <id>Q6ZR08-4</id>
        <name>4</name>
        <sequence type="described" ref="VSP_039335 VSP_039336"/>
    </isoform>
    <isoform>
        <id>Q6ZR08-2</id>
        <name>2</name>
        <sequence type="described" ref="VSP_036920 VSP_036924"/>
    </isoform>
    <isoform>
        <id>Q6ZR08-3</id>
        <name>3</name>
        <sequence type="described" ref="VSP_036921 VSP_036922 VSP_036923"/>
    </isoform>
</comment>
<comment type="domain">
    <text evidence="1">Dynein heavy chains probably consist of an N-terminal stem (which binds cargo and interacts with other dynein components), and the head or motor domain. The motor contains six tandemly-linked AAA domains in the head, which form a ring. A stalk-like structure (formed by two of the coiled coil domains) protrudes between AAA 4 and AAA 5 and terminates in a microtubule-binding site. A seventh domain may also contribute to this ring; it is not clear whether the N-terminus or the C-terminus forms this extra domain. There are four well-conserved and two non-conserved ATPase sites, one per AAA domain. Probably only one of these (within AAA 1) actually hydrolyzes ATP, the others may serve a regulatory function (By similarity).</text>
</comment>
<comment type="similarity">
    <text evidence="5">Belongs to the dynein heavy chain family.</text>
</comment>
<comment type="caution">
    <text evidence="5">Was originally derived from a readthrough transcript including ASB14 and DNAH12. DNHD2 was thought to be a distinct gene.</text>
</comment>
<comment type="sequence caution" evidence="5">
    <conflict type="frameshift">
        <sequence resource="EMBL-CDS" id="AAB09729"/>
    </conflict>
</comment>
<protein>
    <recommendedName>
        <fullName>Dynein axonemal heavy chain 12</fullName>
    </recommendedName>
    <alternativeName>
        <fullName>Axonemal beta dynein heavy chain 12</fullName>
    </alternativeName>
    <alternativeName>
        <fullName>Axonemal dynein heavy chain 12-like protein</fullName>
    </alternativeName>
    <alternativeName>
        <fullName>Axonemal dynein heavy chain 7-like protein</fullName>
    </alternativeName>
    <alternativeName>
        <fullName>Ciliary dynein heavy chain 12</fullName>
    </alternativeName>
    <alternativeName>
        <fullName>Dynein axonemal heavy chain 7-like</fullName>
    </alternativeName>
    <alternativeName>
        <fullName>Dynein heavy chain domain-containing protein 2</fullName>
    </alternativeName>
</protein>
<keyword id="KW-0025">Alternative splicing</keyword>
<keyword id="KW-0067">ATP-binding</keyword>
<keyword id="KW-0966">Cell projection</keyword>
<keyword id="KW-0969">Cilium</keyword>
<keyword id="KW-0175">Coiled coil</keyword>
<keyword id="KW-0963">Cytoplasm</keyword>
<keyword id="KW-0206">Cytoskeleton</keyword>
<keyword id="KW-0243">Dynein</keyword>
<keyword id="KW-0493">Microtubule</keyword>
<keyword id="KW-0505">Motor protein</keyword>
<keyword id="KW-0547">Nucleotide-binding</keyword>
<keyword id="KW-1267">Proteomics identification</keyword>
<keyword id="KW-1185">Reference proteome</keyword>
<keyword id="KW-0677">Repeat</keyword>
<keyword id="KW-0833">Ubl conjugation pathway</keyword>
<accession>Q6ZR08</accession>
<accession>A6NGI2</accession>
<accession>Q6ZTR8</accession>
<accession>Q8N7R9</accession>
<accession>Q8WXK2</accession>
<accession>Q92816</accession>
<gene>
    <name type="primary">DNAH12</name>
    <name type="synonym">DHC3</name>
    <name type="synonym">DLP12</name>
    <name type="synonym">DNAH12L</name>
    <name type="synonym">DNAH7L</name>
    <name type="synonym">DNAHC3</name>
    <name type="synonym">DNHD2</name>
    <name type="synonym">HDHC3</name>
    <name type="synonym">HL19</name>
</gene>
<reference key="1">
    <citation type="journal article" date="2004" name="Nat. Genet.">
        <title>Complete sequencing and characterization of 21,243 full-length human cDNAs.</title>
        <authorList>
            <person name="Ota T."/>
            <person name="Suzuki Y."/>
            <person name="Nishikawa T."/>
            <person name="Otsuki T."/>
            <person name="Sugiyama T."/>
            <person name="Irie R."/>
            <person name="Wakamatsu A."/>
            <person name="Hayashi K."/>
            <person name="Sato H."/>
            <person name="Nagai K."/>
            <person name="Kimura K."/>
            <person name="Makita H."/>
            <person name="Sekine M."/>
            <person name="Obayashi M."/>
            <person name="Nishi T."/>
            <person name="Shibahara T."/>
            <person name="Tanaka T."/>
            <person name="Ishii S."/>
            <person name="Yamamoto J."/>
            <person name="Saito K."/>
            <person name="Kawai Y."/>
            <person name="Isono Y."/>
            <person name="Nakamura Y."/>
            <person name="Nagahari K."/>
            <person name="Murakami K."/>
            <person name="Yasuda T."/>
            <person name="Iwayanagi T."/>
            <person name="Wagatsuma M."/>
            <person name="Shiratori A."/>
            <person name="Sudo H."/>
            <person name="Hosoiri T."/>
            <person name="Kaku Y."/>
            <person name="Kodaira H."/>
            <person name="Kondo H."/>
            <person name="Sugawara M."/>
            <person name="Takahashi M."/>
            <person name="Kanda K."/>
            <person name="Yokoi T."/>
            <person name="Furuya T."/>
            <person name="Kikkawa E."/>
            <person name="Omura Y."/>
            <person name="Abe K."/>
            <person name="Kamihara K."/>
            <person name="Katsuta N."/>
            <person name="Sato K."/>
            <person name="Tanikawa M."/>
            <person name="Yamazaki M."/>
            <person name="Ninomiya K."/>
            <person name="Ishibashi T."/>
            <person name="Yamashita H."/>
            <person name="Murakawa K."/>
            <person name="Fujimori K."/>
            <person name="Tanai H."/>
            <person name="Kimata M."/>
            <person name="Watanabe M."/>
            <person name="Hiraoka S."/>
            <person name="Chiba Y."/>
            <person name="Ishida S."/>
            <person name="Ono Y."/>
            <person name="Takiguchi S."/>
            <person name="Watanabe S."/>
            <person name="Yosida M."/>
            <person name="Hotuta T."/>
            <person name="Kusano J."/>
            <person name="Kanehori K."/>
            <person name="Takahashi-Fujii A."/>
            <person name="Hara H."/>
            <person name="Tanase T.-O."/>
            <person name="Nomura Y."/>
            <person name="Togiya S."/>
            <person name="Komai F."/>
            <person name="Hara R."/>
            <person name="Takeuchi K."/>
            <person name="Arita M."/>
            <person name="Imose N."/>
            <person name="Musashino K."/>
            <person name="Yuuki H."/>
            <person name="Oshima A."/>
            <person name="Sasaki N."/>
            <person name="Aotsuka S."/>
            <person name="Yoshikawa Y."/>
            <person name="Matsunawa H."/>
            <person name="Ichihara T."/>
            <person name="Shiohata N."/>
            <person name="Sano S."/>
            <person name="Moriya S."/>
            <person name="Momiyama H."/>
            <person name="Satoh N."/>
            <person name="Takami S."/>
            <person name="Terashima Y."/>
            <person name="Suzuki O."/>
            <person name="Nakagawa S."/>
            <person name="Senoh A."/>
            <person name="Mizoguchi H."/>
            <person name="Goto Y."/>
            <person name="Shimizu F."/>
            <person name="Wakebe H."/>
            <person name="Hishigaki H."/>
            <person name="Watanabe T."/>
            <person name="Sugiyama A."/>
            <person name="Takemoto M."/>
            <person name="Kawakami B."/>
            <person name="Yamazaki M."/>
            <person name="Watanabe K."/>
            <person name="Kumagai A."/>
            <person name="Itakura S."/>
            <person name="Fukuzumi Y."/>
            <person name="Fujimori Y."/>
            <person name="Komiyama M."/>
            <person name="Tashiro H."/>
            <person name="Tanigami A."/>
            <person name="Fujiwara T."/>
            <person name="Ono T."/>
            <person name="Yamada K."/>
            <person name="Fujii Y."/>
            <person name="Ozaki K."/>
            <person name="Hirao M."/>
            <person name="Ohmori Y."/>
            <person name="Kawabata A."/>
            <person name="Hikiji T."/>
            <person name="Kobatake N."/>
            <person name="Inagaki H."/>
            <person name="Ikema Y."/>
            <person name="Okamoto S."/>
            <person name="Okitani R."/>
            <person name="Kawakami T."/>
            <person name="Noguchi S."/>
            <person name="Itoh T."/>
            <person name="Shigeta K."/>
            <person name="Senba T."/>
            <person name="Matsumura K."/>
            <person name="Nakajima Y."/>
            <person name="Mizuno T."/>
            <person name="Morinaga M."/>
            <person name="Sasaki M."/>
            <person name="Togashi T."/>
            <person name="Oyama M."/>
            <person name="Hata H."/>
            <person name="Watanabe M."/>
            <person name="Komatsu T."/>
            <person name="Mizushima-Sugano J."/>
            <person name="Satoh T."/>
            <person name="Shirai Y."/>
            <person name="Takahashi Y."/>
            <person name="Nakagawa K."/>
            <person name="Okumura K."/>
            <person name="Nagase T."/>
            <person name="Nomura N."/>
            <person name="Kikuchi H."/>
            <person name="Masuho Y."/>
            <person name="Yamashita R."/>
            <person name="Nakai K."/>
            <person name="Yada T."/>
            <person name="Nakamura Y."/>
            <person name="Ohara O."/>
            <person name="Isogai T."/>
            <person name="Sugano S."/>
        </authorList>
    </citation>
    <scope>NUCLEOTIDE SEQUENCE [LARGE SCALE MRNA] (ISOFORMS 2; 3 AND 4)</scope>
    <scope>VARIANTS ALA-32 AND SER-2893</scope>
    <source>
        <tissue>Testis</tissue>
        <tissue>Trachea</tissue>
    </source>
</reference>
<reference key="2">
    <citation type="journal article" date="2006" name="Nature">
        <title>The DNA sequence, annotation and analysis of human chromosome 3.</title>
        <authorList>
            <person name="Muzny D.M."/>
            <person name="Scherer S.E."/>
            <person name="Kaul R."/>
            <person name="Wang J."/>
            <person name="Yu J."/>
            <person name="Sudbrak R."/>
            <person name="Buhay C.J."/>
            <person name="Chen R."/>
            <person name="Cree A."/>
            <person name="Ding Y."/>
            <person name="Dugan-Rocha S."/>
            <person name="Gill R."/>
            <person name="Gunaratne P."/>
            <person name="Harris R.A."/>
            <person name="Hawes A.C."/>
            <person name="Hernandez J."/>
            <person name="Hodgson A.V."/>
            <person name="Hume J."/>
            <person name="Jackson A."/>
            <person name="Khan Z.M."/>
            <person name="Kovar-Smith C."/>
            <person name="Lewis L.R."/>
            <person name="Lozado R.J."/>
            <person name="Metzker M.L."/>
            <person name="Milosavljevic A."/>
            <person name="Miner G.R."/>
            <person name="Morgan M.B."/>
            <person name="Nazareth L.V."/>
            <person name="Scott G."/>
            <person name="Sodergren E."/>
            <person name="Song X.-Z."/>
            <person name="Steffen D."/>
            <person name="Wei S."/>
            <person name="Wheeler D.A."/>
            <person name="Wright M.W."/>
            <person name="Worley K.C."/>
            <person name="Yuan Y."/>
            <person name="Zhang Z."/>
            <person name="Adams C.Q."/>
            <person name="Ansari-Lari M.A."/>
            <person name="Ayele M."/>
            <person name="Brown M.J."/>
            <person name="Chen G."/>
            <person name="Chen Z."/>
            <person name="Clendenning J."/>
            <person name="Clerc-Blankenburg K.P."/>
            <person name="Chen R."/>
            <person name="Chen Z."/>
            <person name="Davis C."/>
            <person name="Delgado O."/>
            <person name="Dinh H.H."/>
            <person name="Dong W."/>
            <person name="Draper H."/>
            <person name="Ernst S."/>
            <person name="Fu G."/>
            <person name="Gonzalez-Garay M.L."/>
            <person name="Garcia D.K."/>
            <person name="Gillett W."/>
            <person name="Gu J."/>
            <person name="Hao B."/>
            <person name="Haugen E."/>
            <person name="Havlak P."/>
            <person name="He X."/>
            <person name="Hennig S."/>
            <person name="Hu S."/>
            <person name="Huang W."/>
            <person name="Jackson L.R."/>
            <person name="Jacob L.S."/>
            <person name="Kelly S.H."/>
            <person name="Kube M."/>
            <person name="Levy R."/>
            <person name="Li Z."/>
            <person name="Liu B."/>
            <person name="Liu J."/>
            <person name="Liu W."/>
            <person name="Lu J."/>
            <person name="Maheshwari M."/>
            <person name="Nguyen B.-V."/>
            <person name="Okwuonu G.O."/>
            <person name="Palmeiri A."/>
            <person name="Pasternak S."/>
            <person name="Perez L.M."/>
            <person name="Phelps K.A."/>
            <person name="Plopper F.J."/>
            <person name="Qiang B."/>
            <person name="Raymond C."/>
            <person name="Rodriguez R."/>
            <person name="Saenphimmachak C."/>
            <person name="Santibanez J."/>
            <person name="Shen H."/>
            <person name="Shen Y."/>
            <person name="Subramanian S."/>
            <person name="Tabor P.E."/>
            <person name="Verduzco D."/>
            <person name="Waldron L."/>
            <person name="Wang J."/>
            <person name="Wang J."/>
            <person name="Wang Q."/>
            <person name="Williams G.A."/>
            <person name="Wong G.K.-S."/>
            <person name="Yao Z."/>
            <person name="Zhang J."/>
            <person name="Zhang X."/>
            <person name="Zhao G."/>
            <person name="Zhou J."/>
            <person name="Zhou Y."/>
            <person name="Nelson D."/>
            <person name="Lehrach H."/>
            <person name="Reinhardt R."/>
            <person name="Naylor S.L."/>
            <person name="Yang H."/>
            <person name="Olson M."/>
            <person name="Weinstock G."/>
            <person name="Gibbs R.A."/>
        </authorList>
    </citation>
    <scope>NUCLEOTIDE SEQUENCE [LARGE SCALE GENOMIC DNA]</scope>
</reference>
<reference key="3">
    <citation type="journal article" date="1996" name="J. Cell Biol.">
        <title>Mammalian cells express three distinct dynein heavy chains that are localized to different cytoplasmic organelles.</title>
        <authorList>
            <person name="Vaisberg E.A."/>
            <person name="Grissom P.M."/>
            <person name="McIntosh J.R."/>
        </authorList>
    </citation>
    <scope>NUCLEOTIDE SEQUENCE [MRNA] OF 1116-1311 (ISOFORM 1)</scope>
</reference>
<proteinExistence type="evidence at protein level"/>
<sequence length="3092" mass="356942">MSDANKAAIAAEKEALNLKLPPIVHLPENIGVDTPTQSKLLKYRRSKEQQQKINQLVIDGAKRNLDRTLGKRTPLLPPPDYPQTMTSEMKKKGFNYIYMKQCVESSPLVPIQQEWLDHMLRLIPESLKEGKEREELLESLINEVSSDFENSMKRYLVQSVLVKPPVKSLEDEGGPLPESPVGLDYSNPWHSSYVQARNQIFSNLHIIHPTMKMLLDLGYTTFADTVLLDFTGIRAKGPIDCESLKTDLSIQTRNAEEKIMNTWYPKVINLFTKKEALEGVKPEKLDAFYSCVSTLMSNQLKDLLRRTVEGFVKLFDPKDQQRLPIFKIELTFDDDKMEFYPTFQDLEDNVLSLVERIAEALQNVQTIPSWLSGTSTPVNLDTELPEHVLHWAVDTLKAAVHRNLEGARKHYETYVEKYNWLLDGTAVENIETFQTEDHTFDEYTEFIEKFLSLASEIMLLPQWIHYTMVRLDCEDLKTGLTNKAKAFANILLNDIASKYRKENECICSEFEAIKEHALKVPETTEEMMDLISYVEKARTVGIEELILRIQESKRQMSYFLDVFLFPQEDLALNATVLMWPRKINPIFDENDELIENAKHKKENELMAKREKLILEIEKESRRMEEFTEFAELERMQQYVTDVRQLQKRIQESEEAVQFINKEEELFKWELTKYPELDKLKVNIEPYQKFFNFVLKWQRSEKRWMDGGFLDLNGESMEADVEEFSREIFKTLKFFQTKLKKELQEKRKAARKRSLEEEKIEEEPKDNATITMCRMRARHWKQISEIVGYDLTPDSGTTLRKVLKLNLTPYLEQFEVISAGASKEFSLEKAMNTMIGTWEDIAFHISLYRDTGVCILSSVDEIQAILDDQIIKTQTMRGSPFIKPFEHEIKAWEDRLIRIQETIDEWLKVQAQWLYLEPIFCSEDIMQQMPEEGRQFQTVDRHWRDIMKFCAKDPKVLAATSLTGLLEKLQNCNELLEKIMKGLNAYLEKKRLFFPRFFFLSNDEMLEILSETKDPLRVQPHLKKCFEGIAKLEFLPNLDIKAMYSSEGERVELIALISTSAARGAVEKWLIQVEDLMLRSVHDVIAAARLAYPESARRDWVREWPGQVVLCISQMFWTSETQEVISGGTEGLKKYYKELQNQLNEIVELVRGKLSKQTRTTLGALVTIDVHARDVVMDMIKMGVSHDTDFLWLAQLRYYWENENARVRIINCNVKYAYEYLGNSPRLVITPLTDRCYRTLIGAFYLNLGGAPEGPAGTGKTETTKDLAKALAVQCVVFNCSDGLDYLAMGKFFKGLASSGAWACFDEFNRIELEVLSVVAQQILCIQRAIQQKLVVFVFEGTELKLNPNCFVAITMNPGYAGRSELPDNLKVLFRTVAMMVPNYALIAEISLYSYGFLNARPLSVKIVMTYRLCSEQLSSQFHYDYGMRAVKAVLVAAGNLKLKYPNENEDILLLRSIKDVNEPKFLSHDIPLFNGITSDLFPGIKLPEADYHEFLECAHEACNVHNLQPVKFFLEKIIQTYEMMIVRHGFMLVGEPFAAKTKVLHVLADTLTLMNEHGYGEEEKVIYRTVNPKSITMGQLFGQFDPVSHEWTDGIVANTFREFALSETPDRKWVVFDGPIDTLWIESMNTVLDDNKKLCLMSGEIIQMSPQMSLIFETMDLSQASPATVSRCGMIYLEPSQLGWEPLVSSWLNSLKGPLCEPEYQALLRGLFAWLIPPSLNQRVELFQLNYLYTTIVSKILKILITFRISNYFKYVPLKTQCTFIKFFLHQQACFIFSLIWSIGGSCDTDGRRVFDTFIRLIILGKDDENPVPDSVGKWECPFDEKGLVYDYMYELKNKGRWVHWNELIKNTNLGDKQIKIQDIIVPTMDTIRYTFLMDLSITYAKPLLFVGPTGTGKSVYVKDKLMNHLEKDQYFPFYINLSARTSANQVQNIIMARLDKRRKGVFGPPMGKKCIIFIDDMNMPALEKYGAQPPIELLRQFFDCGHWYDLKDTSKITLVDIELIAAMGPPGGGRNPVTPRCIRHFNICSINSFSDETMVRIFSSIVAFYLRTHEFPPEYFVIGNQIVNGTMEIYKQSVENLLPTPTKSHYTFNLRDFSRVIRGCLLIERDAVANKHTMIRLFVHEVLRVFYDRLINDDDRRWLFQLTKTVIKDHFKESFHSIFSHLRKQNAPVTEEDLRNLMFGDYMNPDLEGDDRVYIEIPNIHHFSDVVDQCLDEYNQTHKTRMNLVIFRYVLEHLSRICRVLKQSGGNALLVGLGGSGRQSLTRLATSMAKMHIFQPEISKSYGMNEWREDMKSFIAVPVTNRIVDNKSKILEKRLRYLNDHFTYNLYCNICRSLFEKDKLLFSFLLCANLLLARKEIEYQELMFLLTGGVSLKSAEKNPDPTWLQDKSWEEICRASEFPAFRGLRQHFCEHIYEWREIYDSKEPHNAKFPAPMDKNLNELQKIIILRCLRPDKITPAITNYVTDKLGKKFVEPPPFDLTKSYLDSNCTIPLIFVLSPGADPMASLLKFANDKSMSGNKFQAISLGQGQGPIAAKMIKAAIEEGTWVCLQNCHLAVSWMPMLEKICEDFTSETCNSSFRLWLTSYPSSKFPVTILQNGVKMTNEPPTGLRLNLLQSYLTDPVSDPEFFKGCRGKELAWEKLLFGVCFFHALVQERKKFGPLGWNIPYGFNESDLRISIRQLQLFINEYDTIPFEAISYLTGECNYGGRVTDDWDRRLLLTMLADFYNLYIVENPHYKFSPSGNYFAPPKGTYEDYIEFIKKLPFTQHPEIFGLHENVDISKDLQQTKTLFESLLLTQGGSKQTGASGSTDQILLEITKDILNKLPSDFDIEMALRKYPVRYEESMNTVLVQEMERFNNLIITIRNTLRDLEKAIKGVVVMDSALEALSGSLLVGKVPEIWAKRSYPSLKPLGSYITDFLARLNFLQDWYNSGKPCVFWLSGFFFTQAFLTGAMQNYARKYTTPIDLLGYEFEVIPSDTSDTSPEDGVYIHGLYLDGARWDRESGLLAEQYPKLLFDLMPIIWIKPTQKSRIIKSDAYVCPLYKTSERKGTLSTTGHSTNFVIAMLLKTDQPTRHWIKRGVALLCQLDD</sequence>
<feature type="chain" id="PRO_0000370324" description="Dynein axonemal heavy chain 12">
    <location>
        <begin position="1"/>
        <end position="3092"/>
    </location>
</feature>
<feature type="region of interest" description="Stem" evidence="1">
    <location>
        <begin position="1"/>
        <end position="1214"/>
    </location>
</feature>
<feature type="region of interest" description="AAA 1" evidence="1">
    <location>
        <begin position="1215"/>
        <end position="1436"/>
    </location>
</feature>
<feature type="region of interest" description="AAA 2" evidence="1">
    <location>
        <begin position="1496"/>
        <end position="1636"/>
    </location>
</feature>
<feature type="region of interest" description="AAA 3" evidence="1">
    <location>
        <begin position="1853"/>
        <end position="2104"/>
    </location>
</feature>
<feature type="region of interest" description="AAA 4" evidence="1">
    <location>
        <begin position="2218"/>
        <end position="2660"/>
    </location>
</feature>
<feature type="region of interest" description="Stalk" evidence="1">
    <location>
        <begin position="2661"/>
        <end position="2795"/>
    </location>
</feature>
<feature type="region of interest" description="AAA 5" evidence="1">
    <location>
        <begin position="2874"/>
        <end position="3051"/>
    </location>
</feature>
<feature type="coiled-coil region" evidence="2">
    <location>
        <begin position="592"/>
        <end position="665"/>
    </location>
</feature>
<feature type="coiled-coil region" evidence="2">
    <location>
        <begin position="731"/>
        <end position="762"/>
    </location>
</feature>
<feature type="short sequence motif" description="GPAGTGKT motif">
    <location>
        <begin position="1253"/>
        <end position="1260"/>
    </location>
</feature>
<feature type="short sequence motif" description="CFDEFNR motif">
    <location>
        <begin position="1303"/>
        <end position="1309"/>
    </location>
</feature>
<feature type="binding site" evidence="2">
    <location>
        <begin position="1253"/>
        <end position="1260"/>
    </location>
    <ligand>
        <name>ATP</name>
        <dbReference type="ChEBI" id="CHEBI:30616"/>
    </ligand>
</feature>
<feature type="binding site" evidence="2">
    <location>
        <begin position="1534"/>
        <end position="1541"/>
    </location>
    <ligand>
        <name>ATP</name>
        <dbReference type="ChEBI" id="CHEBI:30616"/>
    </ligand>
</feature>
<feature type="binding site" evidence="2">
    <location>
        <begin position="1892"/>
        <end position="1899"/>
    </location>
    <ligand>
        <name>ATP</name>
        <dbReference type="ChEBI" id="CHEBI:30616"/>
    </ligand>
</feature>
<feature type="binding site" evidence="2">
    <location>
        <begin position="2257"/>
        <end position="2264"/>
    </location>
    <ligand>
        <name>ATP</name>
        <dbReference type="ChEBI" id="CHEBI:30616"/>
    </ligand>
</feature>
<feature type="splice variant" id="VSP_036920" description="In isoform 2." evidence="4">
    <location>
        <begin position="1"/>
        <end position="2367"/>
    </location>
</feature>
<feature type="splice variant" id="VSP_036921" description="In isoform 3." evidence="4">
    <location>
        <begin position="1"/>
        <end position="1985"/>
    </location>
</feature>
<feature type="splice variant" id="VSP_039335" description="In isoform 4." evidence="4">
    <original>FIEKFLSLASEI</original>
    <variation>ELDCWVVWEVYF</variation>
    <location>
        <begin position="446"/>
        <end position="457"/>
    </location>
</feature>
<feature type="splice variant" id="VSP_039336" description="In isoform 4." evidence="4">
    <location>
        <begin position="458"/>
        <end position="3092"/>
    </location>
</feature>
<feature type="splice variant" id="VSP_036922" description="In isoform 3." evidence="4">
    <original>GHWYDLKDTSKITLVDIELIAAMGPPGGGRNPVTPRCIRHFNICSINSFSDETMVRIFSSIVAFYLRTHEFPPEYFVIGNQIVNGTMEIYKQSVENLLPTPTKSHYTFNLRDFSRVIRGCLLIERDAVANKHTMIRLFVHEVLRVFYDRLINDDDRRWLFQLTKTVIKDHFKESFHSIFSHLRKQNAPVTEEDLRNLMFGDYMNPDLEGDDRVYIEIPNIHHFSDVVDQCLDEYNQTHKTRMNLVIFRYVLEHLSRICRVLKQSGGNALLVGLGGSGRQSLTRLATSMAKMHIFQPEISKSYGMNEWREDM</original>
    <variation>MLCKKKKIPCSEEFLLSKTLGDPVKIRAWNIAGLPTDTFSIDNGVIVNNCRRWPLMIDPQGQANKWIKNSERENQLSVIKLSDSDYMRTLENCIQFGTPLLLENVGEELDPSLEPLLLRQTFKQGGIDCIRLGEVIIEYSFDFKFYITTKLRNPHYMPELATKVSLLNFMITPEGLEDQLLGIVVAKERPELEEERNALILQSAANKKQLKDIEKKILETLSSSEGNILEDESAIKVLDSAKMMSNEITKKQQIAEKTELKIAESREGYRPIAKHSSVLFFSIADLANIDPMYQYSLTWFVNLYINSIHDS</variation>
    <location>
        <begin position="1986"/>
        <end position="2296"/>
    </location>
</feature>
<feature type="splice variant" id="VSP_036923" description="In isoform 3." evidence="4">
    <location>
        <begin position="2297"/>
        <end position="2310"/>
    </location>
</feature>
<feature type="splice variant" id="VSP_036924" description="In isoform 2." evidence="4">
    <location>
        <begin position="2641"/>
        <end position="2686"/>
    </location>
</feature>
<feature type="sequence variant" id="VAR_034829" description="In dbSNP:rs9311651." evidence="3">
    <original>V</original>
    <variation>A</variation>
    <location>
        <position position="32"/>
    </location>
</feature>
<feature type="sequence variant" id="VAR_034830" description="In dbSNP:rs6778837.">
    <original>S</original>
    <variation>N</variation>
    <location>
        <position position="139"/>
    </location>
</feature>
<feature type="sequence variant" id="VAR_034831" description="In dbSNP:rs6445902.">
    <original>D</original>
    <variation>E</variation>
    <location>
        <position position="224"/>
    </location>
</feature>
<feature type="sequence variant" id="VAR_034832" description="In dbSNP:rs7629743.">
    <original>T</original>
    <variation>A</variation>
    <location>
        <position position="231"/>
    </location>
</feature>
<feature type="sequence variant" id="VAR_060142" description="In dbSNP:rs6806444.">
    <original>T</original>
    <variation>P</variation>
    <location>
        <position position="467"/>
    </location>
</feature>
<feature type="sequence variant" id="VAR_060143" description="In dbSNP:rs6773904.">
    <original>D</original>
    <variation>N</variation>
    <location>
        <position position="1549"/>
    </location>
</feature>
<feature type="sequence variant" id="VAR_060144" description="In dbSNP:rs4462937.">
    <original>Y</original>
    <variation>H</variation>
    <location>
        <position position="1704"/>
    </location>
</feature>
<feature type="sequence variant" id="VAR_060145" description="In dbSNP:rs17050836.">
    <original>R</original>
    <variation>C</variation>
    <location>
        <position position="1748"/>
    </location>
</feature>
<feature type="sequence variant" id="VAR_060146" description="In dbSNP:rs17793014.">
    <original>K</original>
    <variation>N</variation>
    <location>
        <position position="1754"/>
    </location>
</feature>
<feature type="sequence variant" id="VAR_060147" description="In dbSNP:rs4681982.">
    <original>T</original>
    <variation>I</variation>
    <location>
        <position position="1763"/>
    </location>
</feature>
<feature type="sequence variant" id="VAR_037390" description="In dbSNP:rs17057989.">
    <original>Y</original>
    <variation>F</variation>
    <location>
        <position position="2740"/>
    </location>
</feature>
<feature type="sequence variant" id="VAR_037391" description="In dbSNP:rs4060726." evidence="3">
    <original>G</original>
    <variation>S</variation>
    <location>
        <position position="2893"/>
    </location>
</feature>
<feature type="sequence conflict" description="In Ref. 1; BAC86512." evidence="5" ref="1">
    <original>K</original>
    <variation>R</variation>
    <location>
        <position position="13"/>
    </location>
</feature>
<feature type="sequence conflict" description="In Ref. 3; AAB09729." evidence="5" ref="3">
    <original>S</original>
    <variation>G</variation>
    <location>
        <position position="1125"/>
    </location>
</feature>
<feature type="sequence conflict" description="In Ref. 3; AAB09729." evidence="5" ref="3">
    <original>H</original>
    <variation>R</variation>
    <location>
        <position position="1170"/>
    </location>
</feature>
<feature type="sequence conflict" description="In Ref. 3; AAB09729." evidence="5" ref="3">
    <original>IE</original>
    <variation>NS</variation>
    <location>
        <begin position="1310"/>
        <end position="1311"/>
    </location>
</feature>
<dbReference type="EMBL" id="AK097746">
    <property type="protein sequence ID" value="BAC05158.1"/>
    <property type="molecule type" value="mRNA"/>
</dbReference>
<dbReference type="EMBL" id="AK126276">
    <property type="protein sequence ID" value="BAC86512.1"/>
    <property type="molecule type" value="mRNA"/>
</dbReference>
<dbReference type="EMBL" id="AK128592">
    <property type="protein sequence ID" value="BAC87517.1"/>
    <property type="molecule type" value="mRNA"/>
</dbReference>
<dbReference type="EMBL" id="AC092418">
    <property type="status" value="NOT_ANNOTATED_CDS"/>
    <property type="molecule type" value="Genomic_DNA"/>
</dbReference>
<dbReference type="EMBL" id="AC093928">
    <property type="status" value="NOT_ANNOTATED_CDS"/>
    <property type="molecule type" value="Genomic_DNA"/>
</dbReference>
<dbReference type="EMBL" id="AC121250">
    <property type="status" value="NOT_ANNOTATED_CDS"/>
    <property type="molecule type" value="Genomic_DNA"/>
</dbReference>
<dbReference type="EMBL" id="U53532">
    <property type="protein sequence ID" value="AAB09729.1"/>
    <property type="status" value="ALT_FRAME"/>
    <property type="molecule type" value="mRNA"/>
</dbReference>
<dbReference type="CCDS" id="CCDS33771.1">
    <molecule id="Q6ZR08-4"/>
</dbReference>
<dbReference type="RefSeq" id="NP_940966.2">
    <molecule id="Q6ZR08-4"/>
    <property type="nucleotide sequence ID" value="NM_198564.4"/>
</dbReference>
<dbReference type="SMR" id="Q6ZR08"/>
<dbReference type="BioGRID" id="128396">
    <property type="interactions" value="16"/>
</dbReference>
<dbReference type="ELM" id="Q6ZR08"/>
<dbReference type="FunCoup" id="Q6ZR08">
    <property type="interactions" value="58"/>
</dbReference>
<dbReference type="IntAct" id="Q6ZR08">
    <property type="interactions" value="5"/>
</dbReference>
<dbReference type="STRING" id="9606.ENSP00000312554"/>
<dbReference type="GlyGen" id="Q6ZR08">
    <property type="glycosylation" value="3 sites, 1 O-linked glycan (1 site)"/>
</dbReference>
<dbReference type="iPTMnet" id="Q6ZR08"/>
<dbReference type="PhosphoSitePlus" id="Q6ZR08"/>
<dbReference type="BioMuta" id="DNAH12"/>
<dbReference type="DMDM" id="226693521"/>
<dbReference type="jPOST" id="Q6ZR08"/>
<dbReference type="MassIVE" id="Q6ZR08"/>
<dbReference type="PaxDb" id="9606-ENSP00000312554"/>
<dbReference type="PeptideAtlas" id="Q6ZR08"/>
<dbReference type="ProteomicsDB" id="68106">
    <molecule id="Q6ZR08-1"/>
</dbReference>
<dbReference type="ProteomicsDB" id="68107">
    <molecule id="Q6ZR08-2"/>
</dbReference>
<dbReference type="ProteomicsDB" id="68108">
    <molecule id="Q6ZR08-3"/>
</dbReference>
<dbReference type="ProteomicsDB" id="68109">
    <molecule id="Q6ZR08-4"/>
</dbReference>
<dbReference type="Antibodypedia" id="48520">
    <property type="antibodies" value="64 antibodies from 13 providers"/>
</dbReference>
<dbReference type="DNASU" id="201625"/>
<dbReference type="Ensembl" id="ENST00000311202.7">
    <molecule id="Q6ZR08-4"/>
    <property type="protein sequence ID" value="ENSP00000312554.6"/>
    <property type="gene ID" value="ENSG00000174844.15"/>
</dbReference>
<dbReference type="Ensembl" id="ENST00000351747.6">
    <molecule id="Q6ZR08-1"/>
    <property type="protein sequence ID" value="ENSP00000295937.3"/>
    <property type="gene ID" value="ENSG00000174844.15"/>
</dbReference>
<dbReference type="GeneID" id="201625"/>
<dbReference type="KEGG" id="hsa:201625"/>
<dbReference type="UCSC" id="uc003dit.2">
    <molecule id="Q6ZR08-1"/>
    <property type="organism name" value="human"/>
</dbReference>
<dbReference type="AGR" id="HGNC:2943"/>
<dbReference type="CTD" id="201625"/>
<dbReference type="DisGeNET" id="201625"/>
<dbReference type="GeneCards" id="DNAH12"/>
<dbReference type="HGNC" id="HGNC:2943">
    <property type="gene designation" value="DNAH12"/>
</dbReference>
<dbReference type="HPA" id="ENSG00000174844">
    <property type="expression patterns" value="Group enriched (choroid plexus, fallopian tube, lung, testis)"/>
</dbReference>
<dbReference type="MIM" id="603340">
    <property type="type" value="gene"/>
</dbReference>
<dbReference type="neXtProt" id="NX_Q6ZR08"/>
<dbReference type="OpenTargets" id="ENSG00000174844"/>
<dbReference type="PharmGKB" id="PA27397"/>
<dbReference type="VEuPathDB" id="HostDB:ENSG00000174844"/>
<dbReference type="GeneTree" id="ENSGT00940000154280"/>
<dbReference type="HOGENOM" id="CLU_000038_0_2_1"/>
<dbReference type="InParanoid" id="Q6ZR08"/>
<dbReference type="OrthoDB" id="5593012at2759"/>
<dbReference type="PAN-GO" id="Q6ZR08">
    <property type="GO annotations" value="1 GO annotation based on evolutionary models"/>
</dbReference>
<dbReference type="PhylomeDB" id="Q6ZR08"/>
<dbReference type="TreeFam" id="TF333463"/>
<dbReference type="PathwayCommons" id="Q6ZR08"/>
<dbReference type="SignaLink" id="Q6ZR08"/>
<dbReference type="BioGRID-ORCS" id="201625">
    <property type="hits" value="10 hits in 1147 CRISPR screens"/>
</dbReference>
<dbReference type="ChiTaRS" id="DNAH12">
    <property type="organism name" value="human"/>
</dbReference>
<dbReference type="GenomeRNAi" id="201625"/>
<dbReference type="Pharos" id="Q6ZR08">
    <property type="development level" value="Tbio"/>
</dbReference>
<dbReference type="PRO" id="PR:Q6ZR08"/>
<dbReference type="Proteomes" id="UP000005640">
    <property type="component" value="Chromosome 3"/>
</dbReference>
<dbReference type="RNAct" id="Q6ZR08">
    <property type="molecule type" value="protein"/>
</dbReference>
<dbReference type="Bgee" id="ENSG00000174844">
    <property type="expression patterns" value="Expressed in bronchial epithelial cell and 114 other cell types or tissues"/>
</dbReference>
<dbReference type="ExpressionAtlas" id="Q6ZR08">
    <property type="expression patterns" value="baseline and differential"/>
</dbReference>
<dbReference type="GO" id="GO:0005858">
    <property type="term" value="C:axonemal dynein complex"/>
    <property type="evidence" value="ECO:0000318"/>
    <property type="project" value="GO_Central"/>
</dbReference>
<dbReference type="GO" id="GO:0005874">
    <property type="term" value="C:microtubule"/>
    <property type="evidence" value="ECO:0007669"/>
    <property type="project" value="UniProtKB-KW"/>
</dbReference>
<dbReference type="GO" id="GO:0005524">
    <property type="term" value="F:ATP binding"/>
    <property type="evidence" value="ECO:0007669"/>
    <property type="project" value="UniProtKB-KW"/>
</dbReference>
<dbReference type="GO" id="GO:0016887">
    <property type="term" value="F:ATP hydrolysis activity"/>
    <property type="evidence" value="ECO:0007669"/>
    <property type="project" value="InterPro"/>
</dbReference>
<dbReference type="GO" id="GO:0045505">
    <property type="term" value="F:dynein intermediate chain binding"/>
    <property type="evidence" value="ECO:0007669"/>
    <property type="project" value="InterPro"/>
</dbReference>
<dbReference type="GO" id="GO:0051959">
    <property type="term" value="F:dynein light intermediate chain binding"/>
    <property type="evidence" value="ECO:0007669"/>
    <property type="project" value="InterPro"/>
</dbReference>
<dbReference type="GO" id="GO:0008569">
    <property type="term" value="F:minus-end-directed microtubule motor activity"/>
    <property type="evidence" value="ECO:0007669"/>
    <property type="project" value="InterPro"/>
</dbReference>
<dbReference type="GO" id="GO:0007018">
    <property type="term" value="P:microtubule-based movement"/>
    <property type="evidence" value="ECO:0007669"/>
    <property type="project" value="InterPro"/>
</dbReference>
<dbReference type="CDD" id="cd00009">
    <property type="entry name" value="AAA"/>
    <property type="match status" value="1"/>
</dbReference>
<dbReference type="FunFam" id="1.20.920.30:FF:000002">
    <property type="entry name" value="Dynein axonemal heavy chain 3"/>
    <property type="match status" value="1"/>
</dbReference>
<dbReference type="FunFam" id="1.10.8.710:FF:000004">
    <property type="entry name" value="Dynein axonemal heavy chain 6"/>
    <property type="match status" value="1"/>
</dbReference>
<dbReference type="FunFam" id="1.20.140.100:FF:000004">
    <property type="entry name" value="Dynein axonemal heavy chain 6"/>
    <property type="match status" value="1"/>
</dbReference>
<dbReference type="FunFam" id="3.20.180.20:FF:000003">
    <property type="entry name" value="Dynein heavy chain 12, axonemal"/>
    <property type="match status" value="1"/>
</dbReference>
<dbReference type="FunFam" id="3.40.50.300:FF:001112">
    <property type="entry name" value="Dynein heavy chain 12, axonemal"/>
    <property type="match status" value="1"/>
</dbReference>
<dbReference type="FunFam" id="1.10.287.2620:FF:000002">
    <property type="entry name" value="Dynein heavy chain 2, axonemal"/>
    <property type="match status" value="1"/>
</dbReference>
<dbReference type="FunFam" id="3.40.50.300:FF:000044">
    <property type="entry name" value="Dynein heavy chain 5, axonemal"/>
    <property type="match status" value="1"/>
</dbReference>
<dbReference type="FunFam" id="1.10.8.720:FF:000001">
    <property type="entry name" value="dynein heavy chain 7, axonemal"/>
    <property type="match status" value="1"/>
</dbReference>
<dbReference type="FunFam" id="1.20.1270.280:FF:000001">
    <property type="entry name" value="dynein heavy chain 7, axonemal"/>
    <property type="match status" value="1"/>
</dbReference>
<dbReference type="FunFam" id="3.10.490.20:FF:000001">
    <property type="entry name" value="dynein heavy chain 7, axonemal"/>
    <property type="match status" value="1"/>
</dbReference>
<dbReference type="FunFam" id="1.20.58.1120:FF:000005">
    <property type="entry name" value="Dynein, axonemal, heavy chain 12"/>
    <property type="match status" value="1"/>
</dbReference>
<dbReference type="FunFam" id="3.40.50.300:FF:000362">
    <property type="entry name" value="Dynein, axonemal, heavy chain 6"/>
    <property type="match status" value="1"/>
</dbReference>
<dbReference type="FunFam" id="3.40.50.300:FF:005585">
    <property type="entry name" value="Predicted protein"/>
    <property type="match status" value="1"/>
</dbReference>
<dbReference type="Gene3D" id="1.10.287.2620">
    <property type="match status" value="1"/>
</dbReference>
<dbReference type="Gene3D" id="1.10.472.130">
    <property type="match status" value="1"/>
</dbReference>
<dbReference type="Gene3D" id="1.10.8.710">
    <property type="match status" value="1"/>
</dbReference>
<dbReference type="Gene3D" id="1.20.1270.280">
    <property type="match status" value="1"/>
</dbReference>
<dbReference type="Gene3D" id="1.20.58.1120">
    <property type="match status" value="1"/>
</dbReference>
<dbReference type="Gene3D" id="1.20.920.30">
    <property type="match status" value="1"/>
</dbReference>
<dbReference type="Gene3D" id="3.10.490.20">
    <property type="match status" value="1"/>
</dbReference>
<dbReference type="Gene3D" id="1.20.140.100">
    <property type="entry name" value="Dynein heavy chain, N-terminal domain 2"/>
    <property type="match status" value="1"/>
</dbReference>
<dbReference type="Gene3D" id="3.20.180.20">
    <property type="entry name" value="Dynein heavy chain, N-terminal domain 2"/>
    <property type="match status" value="1"/>
</dbReference>
<dbReference type="Gene3D" id="3.40.50.300">
    <property type="entry name" value="P-loop containing nucleotide triphosphate hydrolases"/>
    <property type="match status" value="5"/>
</dbReference>
<dbReference type="Gene3D" id="1.10.8.720">
    <property type="entry name" value="Region D6 of dynein motor"/>
    <property type="match status" value="1"/>
</dbReference>
<dbReference type="InterPro" id="IPR003593">
    <property type="entry name" value="AAA+_ATPase"/>
</dbReference>
<dbReference type="InterPro" id="IPR035699">
    <property type="entry name" value="AAA_6"/>
</dbReference>
<dbReference type="InterPro" id="IPR041658">
    <property type="entry name" value="AAA_lid_11"/>
</dbReference>
<dbReference type="InterPro" id="IPR042219">
    <property type="entry name" value="AAA_lid_11_sf"/>
</dbReference>
<dbReference type="InterPro" id="IPR026983">
    <property type="entry name" value="DHC"/>
</dbReference>
<dbReference type="InterPro" id="IPR041589">
    <property type="entry name" value="DNAH3_AAA_lid_1"/>
</dbReference>
<dbReference type="InterPro" id="IPR042222">
    <property type="entry name" value="Dynein_2_N"/>
</dbReference>
<dbReference type="InterPro" id="IPR043157">
    <property type="entry name" value="Dynein_AAA1S"/>
</dbReference>
<dbReference type="InterPro" id="IPR041466">
    <property type="entry name" value="Dynein_AAA5_ext"/>
</dbReference>
<dbReference type="InterPro" id="IPR041228">
    <property type="entry name" value="Dynein_C"/>
</dbReference>
<dbReference type="InterPro" id="IPR043160">
    <property type="entry name" value="Dynein_C_barrel"/>
</dbReference>
<dbReference type="InterPro" id="IPR024317">
    <property type="entry name" value="Dynein_heavy_chain_D4_dom"/>
</dbReference>
<dbReference type="InterPro" id="IPR004273">
    <property type="entry name" value="Dynein_heavy_D6_P-loop"/>
</dbReference>
<dbReference type="InterPro" id="IPR013602">
    <property type="entry name" value="Dynein_heavy_linker"/>
</dbReference>
<dbReference type="InterPro" id="IPR042228">
    <property type="entry name" value="Dynein_linker_3"/>
</dbReference>
<dbReference type="InterPro" id="IPR027417">
    <property type="entry name" value="P-loop_NTPase"/>
</dbReference>
<dbReference type="PANTHER" id="PTHR22878:SF70">
    <property type="entry name" value="DYNEIN HEAVY CHAIN 2, AXONEMAL"/>
    <property type="match status" value="1"/>
</dbReference>
<dbReference type="PANTHER" id="PTHR22878">
    <property type="entry name" value="DYNEIN HEAVY CHAIN 6, AXONEMAL-LIKE-RELATED"/>
    <property type="match status" value="1"/>
</dbReference>
<dbReference type="Pfam" id="PF12774">
    <property type="entry name" value="AAA_6"/>
    <property type="match status" value="1"/>
</dbReference>
<dbReference type="Pfam" id="PF12775">
    <property type="entry name" value="AAA_7"/>
    <property type="match status" value="1"/>
</dbReference>
<dbReference type="Pfam" id="PF12780">
    <property type="entry name" value="AAA_8"/>
    <property type="match status" value="1"/>
</dbReference>
<dbReference type="Pfam" id="PF17857">
    <property type="entry name" value="AAA_lid_1"/>
    <property type="match status" value="1"/>
</dbReference>
<dbReference type="Pfam" id="PF18198">
    <property type="entry name" value="AAA_lid_11"/>
    <property type="match status" value="1"/>
</dbReference>
<dbReference type="Pfam" id="PF08393">
    <property type="entry name" value="DHC_N2"/>
    <property type="match status" value="1"/>
</dbReference>
<dbReference type="Pfam" id="PF17852">
    <property type="entry name" value="Dynein_AAA_lid"/>
    <property type="match status" value="1"/>
</dbReference>
<dbReference type="Pfam" id="PF18199">
    <property type="entry name" value="Dynein_C"/>
    <property type="match status" value="1"/>
</dbReference>
<dbReference type="Pfam" id="PF03028">
    <property type="entry name" value="Dynein_heavy"/>
    <property type="match status" value="1"/>
</dbReference>
<dbReference type="SMART" id="SM00382">
    <property type="entry name" value="AAA"/>
    <property type="match status" value="2"/>
</dbReference>
<dbReference type="SUPFAM" id="SSF52540">
    <property type="entry name" value="P-loop containing nucleoside triphosphate hydrolases"/>
    <property type="match status" value="4"/>
</dbReference>
<organism>
    <name type="scientific">Homo sapiens</name>
    <name type="common">Human</name>
    <dbReference type="NCBI Taxonomy" id="9606"/>
    <lineage>
        <taxon>Eukaryota</taxon>
        <taxon>Metazoa</taxon>
        <taxon>Chordata</taxon>
        <taxon>Craniata</taxon>
        <taxon>Vertebrata</taxon>
        <taxon>Euteleostomi</taxon>
        <taxon>Mammalia</taxon>
        <taxon>Eutheria</taxon>
        <taxon>Euarchontoglires</taxon>
        <taxon>Primates</taxon>
        <taxon>Haplorrhini</taxon>
        <taxon>Catarrhini</taxon>
        <taxon>Hominidae</taxon>
        <taxon>Homo</taxon>
    </lineage>
</organism>
<evidence type="ECO:0000250" key="1"/>
<evidence type="ECO:0000255" key="2"/>
<evidence type="ECO:0000269" key="3">
    <source>
    </source>
</evidence>
<evidence type="ECO:0000303" key="4">
    <source>
    </source>
</evidence>
<evidence type="ECO:0000305" key="5"/>
<name>DYH12_HUMAN</name>